<proteinExistence type="inferred from homology"/>
<accession>B7UKK3</accession>
<dbReference type="EC" id="6.1.1.16" evidence="1"/>
<dbReference type="EMBL" id="FM180568">
    <property type="protein sequence ID" value="CAS08007.1"/>
    <property type="molecule type" value="Genomic_DNA"/>
</dbReference>
<dbReference type="RefSeq" id="WP_000912354.1">
    <property type="nucleotide sequence ID" value="NC_011601.1"/>
</dbReference>
<dbReference type="SMR" id="B7UKK3"/>
<dbReference type="KEGG" id="ecg:E2348C_0459"/>
<dbReference type="HOGENOM" id="CLU_013528_0_1_6"/>
<dbReference type="Proteomes" id="UP000008205">
    <property type="component" value="Chromosome"/>
</dbReference>
<dbReference type="GO" id="GO:0005829">
    <property type="term" value="C:cytosol"/>
    <property type="evidence" value="ECO:0007669"/>
    <property type="project" value="TreeGrafter"/>
</dbReference>
<dbReference type="GO" id="GO:0005524">
    <property type="term" value="F:ATP binding"/>
    <property type="evidence" value="ECO:0007669"/>
    <property type="project" value="UniProtKB-UniRule"/>
</dbReference>
<dbReference type="GO" id="GO:0004817">
    <property type="term" value="F:cysteine-tRNA ligase activity"/>
    <property type="evidence" value="ECO:0007669"/>
    <property type="project" value="UniProtKB-UniRule"/>
</dbReference>
<dbReference type="GO" id="GO:0008270">
    <property type="term" value="F:zinc ion binding"/>
    <property type="evidence" value="ECO:0007669"/>
    <property type="project" value="UniProtKB-UniRule"/>
</dbReference>
<dbReference type="GO" id="GO:0006423">
    <property type="term" value="P:cysteinyl-tRNA aminoacylation"/>
    <property type="evidence" value="ECO:0007669"/>
    <property type="project" value="UniProtKB-UniRule"/>
</dbReference>
<dbReference type="CDD" id="cd07963">
    <property type="entry name" value="Anticodon_Ia_Cys"/>
    <property type="match status" value="1"/>
</dbReference>
<dbReference type="CDD" id="cd00672">
    <property type="entry name" value="CysRS_core"/>
    <property type="match status" value="1"/>
</dbReference>
<dbReference type="FunFam" id="1.20.120.1910:FF:000001">
    <property type="entry name" value="Cysteine--tRNA ligase"/>
    <property type="match status" value="1"/>
</dbReference>
<dbReference type="FunFam" id="3.40.50.620:FF:000009">
    <property type="entry name" value="Cysteine--tRNA ligase"/>
    <property type="match status" value="1"/>
</dbReference>
<dbReference type="Gene3D" id="1.20.120.1910">
    <property type="entry name" value="Cysteine-tRNA ligase, C-terminal anti-codon recognition domain"/>
    <property type="match status" value="1"/>
</dbReference>
<dbReference type="Gene3D" id="3.40.50.620">
    <property type="entry name" value="HUPs"/>
    <property type="match status" value="1"/>
</dbReference>
<dbReference type="HAMAP" id="MF_00041">
    <property type="entry name" value="Cys_tRNA_synth"/>
    <property type="match status" value="1"/>
</dbReference>
<dbReference type="InterPro" id="IPR015803">
    <property type="entry name" value="Cys-tRNA-ligase"/>
</dbReference>
<dbReference type="InterPro" id="IPR015273">
    <property type="entry name" value="Cys-tRNA-synt_Ia_DALR"/>
</dbReference>
<dbReference type="InterPro" id="IPR024909">
    <property type="entry name" value="Cys-tRNA/MSH_ligase"/>
</dbReference>
<dbReference type="InterPro" id="IPR056411">
    <property type="entry name" value="CysS_C"/>
</dbReference>
<dbReference type="InterPro" id="IPR014729">
    <property type="entry name" value="Rossmann-like_a/b/a_fold"/>
</dbReference>
<dbReference type="InterPro" id="IPR032678">
    <property type="entry name" value="tRNA-synt_1_cat_dom"/>
</dbReference>
<dbReference type="InterPro" id="IPR009080">
    <property type="entry name" value="tRNAsynth_Ia_anticodon-bd"/>
</dbReference>
<dbReference type="NCBIfam" id="TIGR00435">
    <property type="entry name" value="cysS"/>
    <property type="match status" value="1"/>
</dbReference>
<dbReference type="PANTHER" id="PTHR10890:SF3">
    <property type="entry name" value="CYSTEINE--TRNA LIGASE, CYTOPLASMIC"/>
    <property type="match status" value="1"/>
</dbReference>
<dbReference type="PANTHER" id="PTHR10890">
    <property type="entry name" value="CYSTEINYL-TRNA SYNTHETASE"/>
    <property type="match status" value="1"/>
</dbReference>
<dbReference type="Pfam" id="PF23493">
    <property type="entry name" value="CysS_C"/>
    <property type="match status" value="1"/>
</dbReference>
<dbReference type="Pfam" id="PF09190">
    <property type="entry name" value="DALR_2"/>
    <property type="match status" value="1"/>
</dbReference>
<dbReference type="Pfam" id="PF01406">
    <property type="entry name" value="tRNA-synt_1e"/>
    <property type="match status" value="1"/>
</dbReference>
<dbReference type="PRINTS" id="PR00983">
    <property type="entry name" value="TRNASYNTHCYS"/>
</dbReference>
<dbReference type="SMART" id="SM00840">
    <property type="entry name" value="DALR_2"/>
    <property type="match status" value="1"/>
</dbReference>
<dbReference type="SUPFAM" id="SSF47323">
    <property type="entry name" value="Anticodon-binding domain of a subclass of class I aminoacyl-tRNA synthetases"/>
    <property type="match status" value="1"/>
</dbReference>
<dbReference type="SUPFAM" id="SSF52374">
    <property type="entry name" value="Nucleotidylyl transferase"/>
    <property type="match status" value="1"/>
</dbReference>
<sequence>MLKIFNTLTRQKEEFKPIHAGEVGMYVCGITVYDLCHIGHGRTFVAFDVVARYLRFLGYKLKYVRNITDIDDKIIKRANENGESFVALVDRMIAEMHKDFDALNILRPDMEPRATHHIAEIIELTEQLIAKGHAYVADNGDVMFDVPTDPTYGVLSRQDLDQLQAGARVDVVDDKRNPMDFVLWKMSKEGEPSWPSPWGAGRPGWHIECSAMNCKQLGNHFDIHGGGSDLMFPHHENEIAQSTCAHDGRYVNYWMHSGMVMVDREKMSKSLGNFFTVRDVLKYYDAETVRYFLMSGHYRSQLNYSEENLKQARAALERLYTALRGTDKTVAPAGGEAFEARFIEAMDDDFNTPEAYSVLFDMAREVNRLKAEDMAAANAMASHLRKLSAVLGLLEQEPEAFLQSGAQADDSEVAEIEALIQQRLDARKAKDWAAADAARDRLNEMGIVLEDGPQGTTWRRK</sequence>
<gene>
    <name evidence="1" type="primary">cysS</name>
    <name type="ordered locus">E2348C_0459</name>
</gene>
<reference key="1">
    <citation type="journal article" date="2009" name="J. Bacteriol.">
        <title>Complete genome sequence and comparative genome analysis of enteropathogenic Escherichia coli O127:H6 strain E2348/69.</title>
        <authorList>
            <person name="Iguchi A."/>
            <person name="Thomson N.R."/>
            <person name="Ogura Y."/>
            <person name="Saunders D."/>
            <person name="Ooka T."/>
            <person name="Henderson I.R."/>
            <person name="Harris D."/>
            <person name="Asadulghani M."/>
            <person name="Kurokawa K."/>
            <person name="Dean P."/>
            <person name="Kenny B."/>
            <person name="Quail M.A."/>
            <person name="Thurston S."/>
            <person name="Dougan G."/>
            <person name="Hayashi T."/>
            <person name="Parkhill J."/>
            <person name="Frankel G."/>
        </authorList>
    </citation>
    <scope>NUCLEOTIDE SEQUENCE [LARGE SCALE GENOMIC DNA]</scope>
    <source>
        <strain>E2348/69 / EPEC</strain>
    </source>
</reference>
<name>SYC_ECO27</name>
<protein>
    <recommendedName>
        <fullName evidence="1">Cysteine--tRNA ligase</fullName>
        <ecNumber evidence="1">6.1.1.16</ecNumber>
    </recommendedName>
    <alternativeName>
        <fullName evidence="1">Cysteinyl-tRNA synthetase</fullName>
        <shortName evidence="1">CysRS</shortName>
    </alternativeName>
</protein>
<evidence type="ECO:0000255" key="1">
    <source>
        <dbReference type="HAMAP-Rule" id="MF_00041"/>
    </source>
</evidence>
<feature type="chain" id="PRO_1000199064" description="Cysteine--tRNA ligase">
    <location>
        <begin position="1"/>
        <end position="461"/>
    </location>
</feature>
<feature type="short sequence motif" description="'HIGH' region">
    <location>
        <begin position="30"/>
        <end position="40"/>
    </location>
</feature>
<feature type="short sequence motif" description="'KMSKS' region">
    <location>
        <begin position="266"/>
        <end position="270"/>
    </location>
</feature>
<feature type="binding site" evidence="1">
    <location>
        <position position="28"/>
    </location>
    <ligand>
        <name>Zn(2+)</name>
        <dbReference type="ChEBI" id="CHEBI:29105"/>
    </ligand>
</feature>
<feature type="binding site" evidence="1">
    <location>
        <position position="209"/>
    </location>
    <ligand>
        <name>Zn(2+)</name>
        <dbReference type="ChEBI" id="CHEBI:29105"/>
    </ligand>
</feature>
<feature type="binding site" evidence="1">
    <location>
        <position position="234"/>
    </location>
    <ligand>
        <name>Zn(2+)</name>
        <dbReference type="ChEBI" id="CHEBI:29105"/>
    </ligand>
</feature>
<feature type="binding site" evidence="1">
    <location>
        <position position="238"/>
    </location>
    <ligand>
        <name>Zn(2+)</name>
        <dbReference type="ChEBI" id="CHEBI:29105"/>
    </ligand>
</feature>
<feature type="binding site" evidence="1">
    <location>
        <position position="269"/>
    </location>
    <ligand>
        <name>ATP</name>
        <dbReference type="ChEBI" id="CHEBI:30616"/>
    </ligand>
</feature>
<keyword id="KW-0030">Aminoacyl-tRNA synthetase</keyword>
<keyword id="KW-0067">ATP-binding</keyword>
<keyword id="KW-0963">Cytoplasm</keyword>
<keyword id="KW-0436">Ligase</keyword>
<keyword id="KW-0479">Metal-binding</keyword>
<keyword id="KW-0547">Nucleotide-binding</keyword>
<keyword id="KW-0648">Protein biosynthesis</keyword>
<keyword id="KW-1185">Reference proteome</keyword>
<keyword id="KW-0862">Zinc</keyword>
<organism>
    <name type="scientific">Escherichia coli O127:H6 (strain E2348/69 / EPEC)</name>
    <dbReference type="NCBI Taxonomy" id="574521"/>
    <lineage>
        <taxon>Bacteria</taxon>
        <taxon>Pseudomonadati</taxon>
        <taxon>Pseudomonadota</taxon>
        <taxon>Gammaproteobacteria</taxon>
        <taxon>Enterobacterales</taxon>
        <taxon>Enterobacteriaceae</taxon>
        <taxon>Escherichia</taxon>
    </lineage>
</organism>
<comment type="catalytic activity">
    <reaction evidence="1">
        <text>tRNA(Cys) + L-cysteine + ATP = L-cysteinyl-tRNA(Cys) + AMP + diphosphate</text>
        <dbReference type="Rhea" id="RHEA:17773"/>
        <dbReference type="Rhea" id="RHEA-COMP:9661"/>
        <dbReference type="Rhea" id="RHEA-COMP:9679"/>
        <dbReference type="ChEBI" id="CHEBI:30616"/>
        <dbReference type="ChEBI" id="CHEBI:33019"/>
        <dbReference type="ChEBI" id="CHEBI:35235"/>
        <dbReference type="ChEBI" id="CHEBI:78442"/>
        <dbReference type="ChEBI" id="CHEBI:78517"/>
        <dbReference type="ChEBI" id="CHEBI:456215"/>
        <dbReference type="EC" id="6.1.1.16"/>
    </reaction>
</comment>
<comment type="cofactor">
    <cofactor evidence="1">
        <name>Zn(2+)</name>
        <dbReference type="ChEBI" id="CHEBI:29105"/>
    </cofactor>
    <text evidence="1">Binds 1 zinc ion per subunit.</text>
</comment>
<comment type="subunit">
    <text evidence="1">Monomer.</text>
</comment>
<comment type="subcellular location">
    <subcellularLocation>
        <location evidence="1">Cytoplasm</location>
    </subcellularLocation>
</comment>
<comment type="similarity">
    <text evidence="1">Belongs to the class-I aminoacyl-tRNA synthetase family.</text>
</comment>